<feature type="chain" id="PRO_0000216809" description="Coenzyme F420H(2) oxidase">
    <location>
        <begin position="1"/>
        <end position="416"/>
    </location>
</feature>
<feature type="domain" description="Flavodoxin-like" evidence="2">
    <location>
        <begin position="266"/>
        <end position="407"/>
    </location>
</feature>
<feature type="binding site" evidence="1">
    <location>
        <position position="87"/>
    </location>
    <ligand>
        <name>Fe cation</name>
        <dbReference type="ChEBI" id="CHEBI:24875"/>
        <label>1</label>
    </ligand>
</feature>
<feature type="binding site" evidence="1">
    <location>
        <position position="89"/>
    </location>
    <ligand>
        <name>Fe cation</name>
        <dbReference type="ChEBI" id="CHEBI:24875"/>
        <label>1</label>
    </ligand>
</feature>
<feature type="binding site" evidence="1">
    <location>
        <position position="91"/>
    </location>
    <ligand>
        <name>Fe cation</name>
        <dbReference type="ChEBI" id="CHEBI:24875"/>
        <label>2</label>
    </ligand>
</feature>
<feature type="binding site" evidence="1">
    <location>
        <position position="92"/>
    </location>
    <ligand>
        <name>Fe cation</name>
        <dbReference type="ChEBI" id="CHEBI:24875"/>
        <label>2</label>
    </ligand>
</feature>
<feature type="binding site" evidence="1">
    <location>
        <position position="155"/>
    </location>
    <ligand>
        <name>Fe cation</name>
        <dbReference type="ChEBI" id="CHEBI:24875"/>
        <label>1</label>
    </ligand>
</feature>
<feature type="binding site" evidence="1">
    <location>
        <position position="174"/>
    </location>
    <ligand>
        <name>Fe cation</name>
        <dbReference type="ChEBI" id="CHEBI:24875"/>
        <label>1</label>
    </ligand>
</feature>
<feature type="binding site" evidence="1">
    <location>
        <position position="174"/>
    </location>
    <ligand>
        <name>Fe cation</name>
        <dbReference type="ChEBI" id="CHEBI:24875"/>
        <label>2</label>
    </ligand>
</feature>
<feature type="binding site" evidence="1">
    <location>
        <position position="239"/>
    </location>
    <ligand>
        <name>Fe cation</name>
        <dbReference type="ChEBI" id="CHEBI:24875"/>
        <label>2</label>
    </ligand>
</feature>
<feature type="binding site" evidence="1">
    <location>
        <begin position="272"/>
        <end position="277"/>
    </location>
    <ligand>
        <name>FMN</name>
        <dbReference type="ChEBI" id="CHEBI:58210"/>
    </ligand>
</feature>
<feature type="binding site" evidence="1">
    <location>
        <begin position="324"/>
        <end position="327"/>
    </location>
    <ligand>
        <name>FMN</name>
        <dbReference type="ChEBI" id="CHEBI:58210"/>
    </ligand>
</feature>
<feature type="binding site" evidence="1">
    <location>
        <begin position="359"/>
        <end position="364"/>
    </location>
    <ligand>
        <name>FMN</name>
        <dbReference type="ChEBI" id="CHEBI:58210"/>
    </ligand>
</feature>
<protein>
    <recommendedName>
        <fullName evidence="3">Coenzyme F420H(2) oxidase</fullName>
        <ecNumber evidence="1">1.5.3.22</ecNumber>
    </recommendedName>
    <alternativeName>
        <fullName>FMN protein FprA</fullName>
    </alternativeName>
    <alternativeName>
        <fullName>Flavoprotein A</fullName>
    </alternativeName>
    <alternativeName>
        <fullName>Type A flavoprotein FprA</fullName>
    </alternativeName>
</protein>
<name>FPRA_METJA</name>
<organism>
    <name type="scientific">Methanocaldococcus jannaschii (strain ATCC 43067 / DSM 2661 / JAL-1 / JCM 10045 / NBRC 100440)</name>
    <name type="common">Methanococcus jannaschii</name>
    <dbReference type="NCBI Taxonomy" id="243232"/>
    <lineage>
        <taxon>Archaea</taxon>
        <taxon>Methanobacteriati</taxon>
        <taxon>Methanobacteriota</taxon>
        <taxon>Methanomada group</taxon>
        <taxon>Methanococci</taxon>
        <taxon>Methanococcales</taxon>
        <taxon>Methanocaldococcaceae</taxon>
        <taxon>Methanocaldococcus</taxon>
    </lineage>
</organism>
<reference key="1">
    <citation type="journal article" date="1996" name="Science">
        <title>Complete genome sequence of the methanogenic archaeon, Methanococcus jannaschii.</title>
        <authorList>
            <person name="Bult C.J."/>
            <person name="White O."/>
            <person name="Olsen G.J."/>
            <person name="Zhou L."/>
            <person name="Fleischmann R.D."/>
            <person name="Sutton G.G."/>
            <person name="Blake J.A."/>
            <person name="FitzGerald L.M."/>
            <person name="Clayton R.A."/>
            <person name="Gocayne J.D."/>
            <person name="Kerlavage A.R."/>
            <person name="Dougherty B.A."/>
            <person name="Tomb J.-F."/>
            <person name="Adams M.D."/>
            <person name="Reich C.I."/>
            <person name="Overbeek R."/>
            <person name="Kirkness E.F."/>
            <person name="Weinstock K.G."/>
            <person name="Merrick J.M."/>
            <person name="Glodek A."/>
            <person name="Scott J.L."/>
            <person name="Geoghagen N.S.M."/>
            <person name="Weidman J.F."/>
            <person name="Fuhrmann J.L."/>
            <person name="Nguyen D."/>
            <person name="Utterback T.R."/>
            <person name="Kelley J.M."/>
            <person name="Peterson J.D."/>
            <person name="Sadow P.W."/>
            <person name="Hanna M.C."/>
            <person name="Cotton M.D."/>
            <person name="Roberts K.M."/>
            <person name="Hurst M.A."/>
            <person name="Kaine B.P."/>
            <person name="Borodovsky M."/>
            <person name="Klenk H.-P."/>
            <person name="Fraser C.M."/>
            <person name="Smith H.O."/>
            <person name="Woese C.R."/>
            <person name="Venter J.C."/>
        </authorList>
    </citation>
    <scope>NUCLEOTIDE SEQUENCE [LARGE SCALE GENOMIC DNA]</scope>
    <source>
        <strain>ATCC 43067 / DSM 2661 / JAL-1 / JCM 10045 / NBRC 100440</strain>
    </source>
</reference>
<reference key="2">
    <citation type="journal article" date="1998" name="Eur. J. Biochem.">
        <title>A family of flavoproteins in the domains Archaea and Bacteria.</title>
        <authorList>
            <person name="Wasserfallen A."/>
            <person name="Ragettli S."/>
            <person name="Jouanneau Y."/>
            <person name="Leisinger T."/>
        </authorList>
    </citation>
    <scope>DISCUSSION OF FUNCTION</scope>
    <source>
        <strain>ATCC 43067 / DSM 2661 / JAL-1 / JCM 10045 / NBRC 100440</strain>
    </source>
</reference>
<proteinExistence type="inferred from homology"/>
<comment type="function">
    <text evidence="1">Catalyzes the oxidation of F420H(2) with O(2) (By similarity). May be involved in O(2) detoxification, reducing the intracellular O(2) concentration to a level allowing growth at the expense of methane formation (By similarity).</text>
</comment>
<comment type="catalytic activity">
    <reaction evidence="1">
        <text>2 reduced coenzyme F420-(gamma-L-Glu)(n) + O2 = 2 oxidized coenzyme F420-(gamma-L-Glu)(n) + 2 H2O + 2 H(+)</text>
        <dbReference type="Rhea" id="RHEA:39711"/>
        <dbReference type="Rhea" id="RHEA-COMP:12939"/>
        <dbReference type="Rhea" id="RHEA-COMP:14378"/>
        <dbReference type="ChEBI" id="CHEBI:15377"/>
        <dbReference type="ChEBI" id="CHEBI:15378"/>
        <dbReference type="ChEBI" id="CHEBI:15379"/>
        <dbReference type="ChEBI" id="CHEBI:133980"/>
        <dbReference type="ChEBI" id="CHEBI:139511"/>
        <dbReference type="EC" id="1.5.3.22"/>
    </reaction>
</comment>
<comment type="cofactor">
    <cofactor evidence="1">
        <name>FMN</name>
        <dbReference type="ChEBI" id="CHEBI:58210"/>
    </cofactor>
    <text evidence="1">Binds 1 FMN per subunit.</text>
</comment>
<comment type="cofactor">
    <cofactor evidence="1">
        <name>Fe cation</name>
        <dbReference type="ChEBI" id="CHEBI:24875"/>
    </cofactor>
    <text evidence="1">Binds 2 iron ions per subunit.</text>
</comment>
<comment type="similarity">
    <text evidence="3">In the N-terminal section; belongs to the zinc metallo-hydrolase group 3 family.</text>
</comment>
<evidence type="ECO:0000250" key="1">
    <source>
        <dbReference type="UniProtKB" id="Q50497"/>
    </source>
</evidence>
<evidence type="ECO:0000255" key="2">
    <source>
        <dbReference type="PROSITE-ProRule" id="PRU00088"/>
    </source>
</evidence>
<evidence type="ECO:0000305" key="3"/>
<accession>Q58158</accession>
<sequence>MKKYESRRSKIADGVYWVGVLDWDIRMYHGYTLKGTTYNAYLVFGDEKVALIDNTYPGTSAQMWGRIKDAFEKEGREFKIDVIVQNHVEKDHSGALPEIHKKFPDAPIYCTEVAVEGLKKHYPSLKDAQFKVVHTGDTVDLGGKTLTFLEAPLLHWPDSMFTFYNEGGILFSNDAFGQHLCFPAHKRFDKDIPEYVLMDANQKFYANLITPLSKLVLKKFEEVIQLGLLEKIKMIAPSHGQIWTDPMKVIKAYQDFATGKAAKDKAVIVYDTMHYSTQKMAHAFAEGLMSEGIDVVMYFLHYDERSEIVKDILDAKAVLFGIPTIYDEPYPSIGDIIYYLRGLKFNRTGFKRLAVTFGSMGGEGGAVAKIAEDLAKCGFEVINQYELYYVPTEDELTNCYNMGKELAKRIKEMKIE</sequence>
<gene>
    <name type="primary">fprA</name>
    <name type="ordered locus">MJ0748</name>
</gene>
<keyword id="KW-0249">Electron transport</keyword>
<keyword id="KW-0285">Flavoprotein</keyword>
<keyword id="KW-0288">FMN</keyword>
<keyword id="KW-0408">Iron</keyword>
<keyword id="KW-0479">Metal-binding</keyword>
<keyword id="KW-0560">Oxidoreductase</keyword>
<keyword id="KW-1185">Reference proteome</keyword>
<keyword id="KW-0813">Transport</keyword>
<dbReference type="EC" id="1.5.3.22" evidence="1"/>
<dbReference type="EMBL" id="L77117">
    <property type="protein sequence ID" value="AAB98741.1"/>
    <property type="molecule type" value="Genomic_DNA"/>
</dbReference>
<dbReference type="PIR" id="D64393">
    <property type="entry name" value="D64393"/>
</dbReference>
<dbReference type="SMR" id="Q58158"/>
<dbReference type="FunCoup" id="Q58158">
    <property type="interactions" value="2"/>
</dbReference>
<dbReference type="STRING" id="243232.MJ_0748"/>
<dbReference type="PaxDb" id="243232-MJ_0748"/>
<dbReference type="EnsemblBacteria" id="AAB98741">
    <property type="protein sequence ID" value="AAB98741"/>
    <property type="gene ID" value="MJ_0748"/>
</dbReference>
<dbReference type="KEGG" id="mja:MJ_0748"/>
<dbReference type="eggNOG" id="arCOG00509">
    <property type="taxonomic scope" value="Archaea"/>
</dbReference>
<dbReference type="HOGENOM" id="CLU_017490_0_0_2"/>
<dbReference type="InParanoid" id="Q58158"/>
<dbReference type="OrthoDB" id="6433at2157"/>
<dbReference type="PhylomeDB" id="Q58158"/>
<dbReference type="Proteomes" id="UP000000805">
    <property type="component" value="Chromosome"/>
</dbReference>
<dbReference type="GO" id="GO:0009055">
    <property type="term" value="F:electron transfer activity"/>
    <property type="evidence" value="ECO:0007669"/>
    <property type="project" value="InterPro"/>
</dbReference>
<dbReference type="GO" id="GO:0010181">
    <property type="term" value="F:FMN binding"/>
    <property type="evidence" value="ECO:0007669"/>
    <property type="project" value="InterPro"/>
</dbReference>
<dbReference type="GO" id="GO:0046872">
    <property type="term" value="F:metal ion binding"/>
    <property type="evidence" value="ECO:0007669"/>
    <property type="project" value="UniProtKB-KW"/>
</dbReference>
<dbReference type="GO" id="GO:0016491">
    <property type="term" value="F:oxidoreductase activity"/>
    <property type="evidence" value="ECO:0000318"/>
    <property type="project" value="GO_Central"/>
</dbReference>
<dbReference type="CDD" id="cd07709">
    <property type="entry name" value="flavodiiron_proteins_MBL-fold"/>
    <property type="match status" value="1"/>
</dbReference>
<dbReference type="Gene3D" id="3.40.50.360">
    <property type="match status" value="1"/>
</dbReference>
<dbReference type="Gene3D" id="3.60.15.10">
    <property type="entry name" value="Ribonuclease Z/Hydroxyacylglutathione hydrolase-like"/>
    <property type="match status" value="1"/>
</dbReference>
<dbReference type="InterPro" id="IPR008254">
    <property type="entry name" value="Flavodoxin/NO_synth"/>
</dbReference>
<dbReference type="InterPro" id="IPR029039">
    <property type="entry name" value="Flavoprotein-like_sf"/>
</dbReference>
<dbReference type="InterPro" id="IPR001279">
    <property type="entry name" value="Metallo-B-lactamas"/>
</dbReference>
<dbReference type="InterPro" id="IPR045761">
    <property type="entry name" value="ODP_dom"/>
</dbReference>
<dbReference type="InterPro" id="IPR000014">
    <property type="entry name" value="PAS"/>
</dbReference>
<dbReference type="InterPro" id="IPR036866">
    <property type="entry name" value="RibonucZ/Hydroxyglut_hydro"/>
</dbReference>
<dbReference type="InterPro" id="IPR016440">
    <property type="entry name" value="Rubredoxin-O_OxRdtase"/>
</dbReference>
<dbReference type="PANTHER" id="PTHR43717">
    <property type="entry name" value="ANAEROBIC NITRIC OXIDE REDUCTASE FLAVORUBREDOXIN"/>
    <property type="match status" value="1"/>
</dbReference>
<dbReference type="PANTHER" id="PTHR43717:SF1">
    <property type="entry name" value="ANAEROBIC NITRIC OXIDE REDUCTASE FLAVORUBREDOXIN"/>
    <property type="match status" value="1"/>
</dbReference>
<dbReference type="Pfam" id="PF00258">
    <property type="entry name" value="Flavodoxin_1"/>
    <property type="match status" value="1"/>
</dbReference>
<dbReference type="Pfam" id="PF19583">
    <property type="entry name" value="ODP"/>
    <property type="match status" value="1"/>
</dbReference>
<dbReference type="PIRSF" id="PIRSF005243">
    <property type="entry name" value="ROO"/>
    <property type="match status" value="1"/>
</dbReference>
<dbReference type="SMART" id="SM00849">
    <property type="entry name" value="Lactamase_B"/>
    <property type="match status" value="1"/>
</dbReference>
<dbReference type="SMART" id="SM00091">
    <property type="entry name" value="PAS"/>
    <property type="match status" value="1"/>
</dbReference>
<dbReference type="SUPFAM" id="SSF52218">
    <property type="entry name" value="Flavoproteins"/>
    <property type="match status" value="1"/>
</dbReference>
<dbReference type="SUPFAM" id="SSF56281">
    <property type="entry name" value="Metallo-hydrolase/oxidoreductase"/>
    <property type="match status" value="1"/>
</dbReference>
<dbReference type="PROSITE" id="PS50902">
    <property type="entry name" value="FLAVODOXIN_LIKE"/>
    <property type="match status" value="1"/>
</dbReference>